<protein>
    <recommendedName>
        <fullName evidence="15">[F-actin]-monooxygenase MICAL2</fullName>
        <ecNumber evidence="11 13 14">1.14.13.225</ecNumber>
    </recommendedName>
    <alternativeName>
        <fullName>MICAL C-terminal-like protein</fullName>
        <shortName>Mical-cL</shortName>
    </alternativeName>
    <alternativeName>
        <fullName>Molecule interacting with CasL protein 2</fullName>
        <shortName>MICAL-2</shortName>
    </alternativeName>
</protein>
<name>MICA2_HUMAN</name>
<keyword id="KW-0002">3D-structure</keyword>
<keyword id="KW-0009">Actin-binding</keyword>
<keyword id="KW-0025">Alternative splicing</keyword>
<keyword id="KW-0175">Coiled coil</keyword>
<keyword id="KW-0963">Cytoplasm</keyword>
<keyword id="KW-0274">FAD</keyword>
<keyword id="KW-0285">Flavoprotein</keyword>
<keyword id="KW-0440">LIM domain</keyword>
<keyword id="KW-0479">Metal-binding</keyword>
<keyword id="KW-0503">Monooxygenase</keyword>
<keyword id="KW-0521">NADP</keyword>
<keyword id="KW-0539">Nucleus</keyword>
<keyword id="KW-0560">Oxidoreductase</keyword>
<keyword id="KW-0597">Phosphoprotein</keyword>
<keyword id="KW-1267">Proteomics identification</keyword>
<keyword id="KW-1185">Reference proteome</keyword>
<keyword id="KW-0862">Zinc</keyword>
<accession>O94851</accession>
<accession>A0A2R8YFA9</accession>
<accession>B4DGZ0</accession>
<accession>B7Z849</accession>
<accession>D3DQW5</accession>
<accession>G3XAC8</accession>
<accession>Q5KTR3</accession>
<accession>Q5KTR4</accession>
<accession>Q6ZW33</accession>
<accession>Q7RTP7</accession>
<accession>Q7Z3A8</accession>
<accession>Q96JU6</accession>
<feature type="chain" id="PRO_0000075844" description="[F-actin]-monooxygenase MICAL2">
    <location>
        <begin position="1"/>
        <end position="1957"/>
    </location>
</feature>
<feature type="domain" description="Calponin-homology (CH)" evidence="5">
    <location>
        <begin position="516"/>
        <end position="619"/>
    </location>
</feature>
<feature type="domain" description="LIM zinc-binding" evidence="6">
    <location>
        <begin position="1000"/>
        <end position="1062"/>
    </location>
</feature>
<feature type="domain" description="bMERB" evidence="7">
    <location>
        <begin position="1796"/>
        <end position="1945"/>
    </location>
</feature>
<feature type="region of interest" description="Monooxygenase domain" evidence="4">
    <location>
        <begin position="2"/>
        <end position="494"/>
    </location>
</feature>
<feature type="region of interest" description="Disordered" evidence="8">
    <location>
        <begin position="660"/>
        <end position="714"/>
    </location>
</feature>
<feature type="region of interest" description="Disordered" evidence="8">
    <location>
        <begin position="886"/>
        <end position="942"/>
    </location>
</feature>
<feature type="region of interest" description="Disordered" evidence="8">
    <location>
        <begin position="1070"/>
        <end position="1143"/>
    </location>
</feature>
<feature type="region of interest" description="Disordered" evidence="8">
    <location>
        <begin position="1168"/>
        <end position="1243"/>
    </location>
</feature>
<feature type="region of interest" description="Disordered" evidence="8">
    <location>
        <begin position="1258"/>
        <end position="1345"/>
    </location>
</feature>
<feature type="region of interest" description="Interaction with MAPK1" evidence="2">
    <location>
        <begin position="1324"/>
        <end position="1363"/>
    </location>
</feature>
<feature type="region of interest" description="Disordered" evidence="8">
    <location>
        <begin position="1361"/>
        <end position="1431"/>
    </location>
</feature>
<feature type="region of interest" description="Disordered" evidence="8">
    <location>
        <begin position="1467"/>
        <end position="1626"/>
    </location>
</feature>
<feature type="region of interest" description="Disordered" evidence="8">
    <location>
        <begin position="1675"/>
        <end position="1779"/>
    </location>
</feature>
<feature type="short sequence motif" description="Nuclear localization signal" evidence="11">
    <location>
        <begin position="660"/>
        <end position="681"/>
    </location>
</feature>
<feature type="compositionally biased region" description="Polar residues" evidence="8">
    <location>
        <begin position="687"/>
        <end position="714"/>
    </location>
</feature>
<feature type="compositionally biased region" description="Pro residues" evidence="8">
    <location>
        <begin position="899"/>
        <end position="910"/>
    </location>
</feature>
<feature type="compositionally biased region" description="Low complexity" evidence="8">
    <location>
        <begin position="911"/>
        <end position="925"/>
    </location>
</feature>
<feature type="compositionally biased region" description="Basic and acidic residues" evidence="8">
    <location>
        <begin position="1185"/>
        <end position="1195"/>
    </location>
</feature>
<feature type="compositionally biased region" description="Polar residues" evidence="8">
    <location>
        <begin position="1232"/>
        <end position="1243"/>
    </location>
</feature>
<feature type="compositionally biased region" description="Low complexity" evidence="8">
    <location>
        <begin position="1275"/>
        <end position="1294"/>
    </location>
</feature>
<feature type="compositionally biased region" description="Polar residues" evidence="8">
    <location>
        <begin position="1302"/>
        <end position="1316"/>
    </location>
</feature>
<feature type="compositionally biased region" description="Basic and acidic residues" evidence="8">
    <location>
        <begin position="1388"/>
        <end position="1402"/>
    </location>
</feature>
<feature type="compositionally biased region" description="Basic and acidic residues" evidence="8">
    <location>
        <begin position="1413"/>
        <end position="1431"/>
    </location>
</feature>
<feature type="compositionally biased region" description="Low complexity" evidence="8">
    <location>
        <begin position="1485"/>
        <end position="1496"/>
    </location>
</feature>
<feature type="compositionally biased region" description="Basic and acidic residues" evidence="8">
    <location>
        <begin position="1552"/>
        <end position="1562"/>
    </location>
</feature>
<feature type="compositionally biased region" description="Polar residues" evidence="8">
    <location>
        <begin position="1570"/>
        <end position="1579"/>
    </location>
</feature>
<feature type="compositionally biased region" description="Pro residues" evidence="8">
    <location>
        <begin position="1718"/>
        <end position="1733"/>
    </location>
</feature>
<feature type="compositionally biased region" description="Low complexity" evidence="8">
    <location>
        <begin position="1751"/>
        <end position="1762"/>
    </location>
</feature>
<feature type="binding site" evidence="4">
    <location>
        <position position="97"/>
    </location>
    <ligand>
        <name>FAD</name>
        <dbReference type="ChEBI" id="CHEBI:57692"/>
    </ligand>
</feature>
<feature type="binding site" evidence="4">
    <location>
        <begin position="116"/>
        <end position="118"/>
    </location>
    <ligand>
        <name>FAD</name>
        <dbReference type="ChEBI" id="CHEBI:57692"/>
    </ligand>
</feature>
<feature type="binding site" evidence="4">
    <location>
        <begin position="123"/>
        <end position="125"/>
    </location>
    <ligand>
        <name>FAD</name>
        <dbReference type="ChEBI" id="CHEBI:57692"/>
    </ligand>
</feature>
<feature type="binding site" evidence="4">
    <location>
        <position position="183"/>
    </location>
    <ligand>
        <name>FAD</name>
        <dbReference type="ChEBI" id="CHEBI:57692"/>
    </ligand>
</feature>
<feature type="binding site" evidence="4">
    <location>
        <position position="298"/>
    </location>
    <ligand>
        <name>FAD</name>
        <dbReference type="ChEBI" id="CHEBI:57692"/>
    </ligand>
</feature>
<feature type="binding site" evidence="4">
    <location>
        <position position="398"/>
    </location>
    <ligand>
        <name>FAD</name>
        <dbReference type="ChEBI" id="CHEBI:57692"/>
    </ligand>
</feature>
<feature type="binding site" evidence="3">
    <location>
        <position position="1002"/>
    </location>
    <ligand>
        <name>Zn(2+)</name>
        <dbReference type="ChEBI" id="CHEBI:29105"/>
        <label>1</label>
    </ligand>
</feature>
<feature type="binding site" evidence="3">
    <location>
        <position position="1005"/>
    </location>
    <ligand>
        <name>Zn(2+)</name>
        <dbReference type="ChEBI" id="CHEBI:29105"/>
        <label>1</label>
    </ligand>
</feature>
<feature type="binding site" evidence="3">
    <location>
        <position position="1023"/>
    </location>
    <ligand>
        <name>Zn(2+)</name>
        <dbReference type="ChEBI" id="CHEBI:29105"/>
        <label>1</label>
    </ligand>
</feature>
<feature type="binding site" evidence="3">
    <location>
        <position position="1026"/>
    </location>
    <ligand>
        <name>Zn(2+)</name>
        <dbReference type="ChEBI" id="CHEBI:29105"/>
        <label>1</label>
    </ligand>
</feature>
<feature type="binding site" evidence="3">
    <location>
        <position position="1029"/>
    </location>
    <ligand>
        <name>Zn(2+)</name>
        <dbReference type="ChEBI" id="CHEBI:29105"/>
        <label>2</label>
    </ligand>
</feature>
<feature type="binding site" evidence="3">
    <location>
        <position position="1032"/>
    </location>
    <ligand>
        <name>Zn(2+)</name>
        <dbReference type="ChEBI" id="CHEBI:29105"/>
        <label>2</label>
    </ligand>
</feature>
<feature type="binding site" evidence="3">
    <location>
        <position position="1052"/>
    </location>
    <ligand>
        <name>Zn(2+)</name>
        <dbReference type="ChEBI" id="CHEBI:29105"/>
        <label>2</label>
    </ligand>
</feature>
<feature type="binding site" evidence="3">
    <location>
        <position position="1055"/>
    </location>
    <ligand>
        <name>Zn(2+)</name>
        <dbReference type="ChEBI" id="CHEBI:29105"/>
        <label>2</label>
    </ligand>
</feature>
<feature type="modified residue" description="Phosphoserine" evidence="18">
    <location>
        <position position="631"/>
    </location>
</feature>
<feature type="modified residue" description="Phosphoserine" evidence="1">
    <location>
        <position position="1688"/>
    </location>
</feature>
<feature type="splice variant" id="VSP_061291" description="In isoform 2.">
    <location>
        <begin position="1"/>
        <end position="171"/>
    </location>
</feature>
<feature type="splice variant" id="VSP_061292" description="In isoform 6 and isoform 2.">
    <location>
        <begin position="740"/>
        <end position="986"/>
    </location>
</feature>
<feature type="splice variant" id="VSP_061293" description="In isoform 4 and isoform 5.">
    <location>
        <begin position="740"/>
        <end position="929"/>
    </location>
</feature>
<feature type="splice variant" id="VSP_061294" description="In isoform 3.">
    <location>
        <begin position="929"/>
        <end position="949"/>
    </location>
</feature>
<feature type="splice variant" id="VSP_061295" description="In isoform 4.">
    <location>
        <begin position="950"/>
        <end position="985"/>
    </location>
</feature>
<feature type="splice variant" id="VSP_061296" description="In isoform 4, isoform 6 and isoform 2.">
    <original>DEPTSPKRPKSISEPQHSDAEGDAASPLPSEWTSVRISPGEEAAGQDVLAVRVLVTSEDSSSDTESDYGGSEGSHTEPCEEKPWRPGSPHL</original>
    <variation>GISTSFFRKVLGWPLRLPRDLCNWMQGLLQAAGLHIRDNAYNYCYMYELLSLGLPLLWAFSEVLAAMYRESEGSLESICNWVLRCFPVKLR</variation>
    <location>
        <begin position="1112"/>
        <end position="1202"/>
    </location>
</feature>
<feature type="splice variant" id="VSP_061297" description="In isoform 1, isoform 3 and isoform 5.">
    <original>DEPTSPKRPKSIS</original>
    <variation>VHFSLPVLHPLLG</variation>
    <location>
        <begin position="1112"/>
        <end position="1124"/>
    </location>
</feature>
<feature type="splice variant" id="VSP_061298" description="In isoform 1, isoform 3 and isoform 5.">
    <location>
        <begin position="1125"/>
        <end position="1957"/>
    </location>
</feature>
<feature type="splice variant" id="VSP_061299" description="In isoform 4, isoform 6 and isoform 2.">
    <location>
        <begin position="1203"/>
        <end position="1957"/>
    </location>
</feature>
<feature type="sequence variant" id="VAR_050155" description="In dbSNP:rs2706656.">
    <original>F</original>
    <variation>L</variation>
    <location>
        <position position="145"/>
    </location>
</feature>
<feature type="sequence variant" id="VAR_021992" description="In dbSNP:rs2306727.">
    <original>I</original>
    <variation>V</variation>
    <location>
        <position position="220"/>
    </location>
</feature>
<feature type="sequence variant" id="VAR_050156" description="In dbSNP:rs3794084.">
    <original>D</original>
    <variation>E</variation>
    <location>
        <position position="687"/>
    </location>
</feature>
<feature type="sequence variant" id="VAR_020257" description="In dbSNP:rs2270515.">
    <original>R</original>
    <variation>Q</variation>
    <location>
        <position position="1089"/>
    </location>
</feature>
<feature type="sequence variant" id="VAR_024523" description="In dbSNP:rs1027335." evidence="9">
    <original>L</original>
    <variation>P</variation>
    <location>
        <position position="1106"/>
    </location>
</feature>
<feature type="sequence variant" id="VAR_050157" description="In dbSNP:rs35518829.">
    <original>P</original>
    <variation>S</variation>
    <location>
        <position position="1110"/>
    </location>
</feature>
<feature type="sequence variant" id="VAR_056936" description="In dbSNP:rs10741578." evidence="9">
    <original>V</original>
    <variation>I</variation>
    <location>
        <position position="1332"/>
    </location>
</feature>
<feature type="sequence variant" id="VAR_056937" description="In dbSNP:rs12574273.">
    <original>Y</original>
    <variation>S</variation>
    <location>
        <position position="1355"/>
    </location>
</feature>
<feature type="sequence variant" id="VAR_056938" description="In dbSNP:rs1493953." evidence="9">
    <original>A</original>
    <variation>T</variation>
    <location>
        <position position="1567"/>
    </location>
</feature>
<feature type="sequence variant" id="VAR_056939" description="In dbSNP:rs1493954." evidence="9">
    <original>S</original>
    <variation>G</variation>
    <location>
        <position position="1575"/>
    </location>
</feature>
<feature type="sequence variant" id="VAR_056940" description="In dbSNP:rs3812753." evidence="9">
    <original>D</original>
    <variation>E</variation>
    <location>
        <position position="1631"/>
    </location>
</feature>
<feature type="sequence variant" id="VAR_061684" description="In dbSNP:rs3812754.">
    <original>T</original>
    <variation>P</variation>
    <location>
        <position position="1733"/>
    </location>
</feature>
<feature type="mutagenesis site" description="Blocks FAD binding and abolishes catalytic activity." evidence="11">
    <original>G</original>
    <variation>V</variation>
    <location>
        <position position="95"/>
    </location>
</feature>
<feature type="mutagenesis site" description="In MICAL-2NLSMut; abolishes nuclear localization." evidence="11">
    <original>KRRRK</original>
    <variation>AAAAA</variation>
    <location>
        <begin position="677"/>
        <end position="681"/>
    </location>
</feature>
<feature type="sequence conflict" description="In Ref. 3; BAG57951." evidence="15" ref="3">
    <original>F</original>
    <variation>S</variation>
    <location>
        <position position="19"/>
    </location>
</feature>
<feature type="sequence conflict" description="In Ref. 4; CAD97967." evidence="15" ref="4">
    <original>D</original>
    <variation>G</variation>
    <location>
        <position position="208"/>
    </location>
</feature>
<feature type="sequence conflict" description="In Ref. 4; CAD97967." evidence="15" ref="4">
    <original>T</original>
    <variation>A</variation>
    <location>
        <position position="296"/>
    </location>
</feature>
<feature type="sequence conflict" description="In Ref. 3; BAG57951." evidence="15" ref="3">
    <original>Q</original>
    <variation>H</variation>
    <location>
        <position position="529"/>
    </location>
</feature>
<feature type="sequence conflict" description="In Ref. 3; BAG57951." evidence="15" ref="3">
    <original>I</original>
    <variation>V</variation>
    <location>
        <position position="563"/>
    </location>
</feature>
<feature type="sequence conflict" description="In Ref. 4; CAD97967." evidence="15" ref="4">
    <original>S</original>
    <variation>Y</variation>
    <location>
        <position position="631"/>
    </location>
</feature>
<feature type="sequence conflict" description="In Ref. 3; BAC85674." evidence="15" ref="3">
    <original>P</original>
    <variation>PP</variation>
    <location>
        <position position="1732"/>
    </location>
</feature>
<feature type="helix" evidence="19">
    <location>
        <begin position="520"/>
        <end position="530"/>
    </location>
</feature>
<feature type="strand" evidence="19">
    <location>
        <begin position="540"/>
        <end position="542"/>
    </location>
</feature>
<feature type="helix" evidence="19">
    <location>
        <begin position="543"/>
        <end position="545"/>
    </location>
</feature>
<feature type="strand" evidence="19">
    <location>
        <begin position="546"/>
        <end position="548"/>
    </location>
</feature>
<feature type="helix" evidence="19">
    <location>
        <begin position="549"/>
        <end position="558"/>
    </location>
</feature>
<feature type="turn" evidence="19">
    <location>
        <begin position="560"/>
        <end position="562"/>
    </location>
</feature>
<feature type="turn" evidence="19">
    <location>
        <begin position="565"/>
        <end position="567"/>
    </location>
</feature>
<feature type="helix" evidence="19">
    <location>
        <begin position="570"/>
        <end position="572"/>
    </location>
</feature>
<feature type="helix" evidence="19">
    <location>
        <begin position="573"/>
        <end position="586"/>
    </location>
</feature>
<feature type="helix" evidence="19">
    <location>
        <begin position="596"/>
        <end position="601"/>
    </location>
</feature>
<feature type="helix" evidence="19">
    <location>
        <begin position="607"/>
        <end position="621"/>
    </location>
</feature>
<feature type="helix" evidence="20">
    <location>
        <begin position="1796"/>
        <end position="1834"/>
    </location>
</feature>
<feature type="helix" evidence="20">
    <location>
        <begin position="1845"/>
        <end position="1894"/>
    </location>
</feature>
<feature type="helix" evidence="20">
    <location>
        <begin position="1897"/>
        <end position="1899"/>
    </location>
</feature>
<feature type="helix" evidence="20">
    <location>
        <begin position="1902"/>
        <end position="1939"/>
    </location>
</feature>
<comment type="function">
    <text evidence="11 13 14">Methionine monooxygenase that promotes depolymerization of F-actin by mediating oxidation of residues 'Met-44' and 'Met-47' on actin to form methionine-sulfoxide, resulting in actin filament disassembly and preventing repolymerization (PubMed:24440334, PubMed:29343822). Regulates the disassembly of branched actin networks also by oxidizing ARP3B-containing ARP2/3 complexes leading to ARP3B dissociation from the network (PubMed:34106209). Acts as a key regulator of the SRF signaling pathway elicited by nerve growth factor and serum: mediates oxidation and subsequent depolymerization of nuclear actin, leading to increase MKL1/MRTF-A presence in the nucleus and promote SRF:MKL1/MRTF-A-dependent gene transcription. Does not activate SRF:MKL1/MRTF-A through RhoA (PubMed:24440334).</text>
</comment>
<comment type="catalytic activity">
    <reaction evidence="11 13 14">
        <text>L-methionyl-[F-actin] + NADPH + O2 + H(+) = L-methionyl-(R)-S-oxide-[F-actin] + NADP(+) + H2O</text>
        <dbReference type="Rhea" id="RHEA:51308"/>
        <dbReference type="Rhea" id="RHEA-COMP:12953"/>
        <dbReference type="Rhea" id="RHEA-COMP:12956"/>
        <dbReference type="ChEBI" id="CHEBI:15377"/>
        <dbReference type="ChEBI" id="CHEBI:15378"/>
        <dbReference type="ChEBI" id="CHEBI:15379"/>
        <dbReference type="ChEBI" id="CHEBI:16044"/>
        <dbReference type="ChEBI" id="CHEBI:45764"/>
        <dbReference type="ChEBI" id="CHEBI:57783"/>
        <dbReference type="ChEBI" id="CHEBI:58349"/>
        <dbReference type="EC" id="1.14.13.225"/>
    </reaction>
</comment>
<comment type="cofactor">
    <cofactor evidence="3">
        <name>FAD</name>
        <dbReference type="ChEBI" id="CHEBI:57692"/>
    </cofactor>
</comment>
<comment type="activity regulation">
    <text evidence="11">Specifically inhibited by CCG-1423, a small molecule inhibitor of SRF:MKL1/MRTF-A-dependent transcription.</text>
</comment>
<comment type="subunit">
    <text evidence="2 10 12 14">Interacts with PLXNA4 (By similarity). Interacts with RAB1B (PubMed:15694364, PubMed:27552051). Interacts with MAPK1/ERK2 (By similarity). Interacts with RAB35, RAB8A, RAB10, RAB13 and RAB15 (in their GTP-bound forms); binding to RAB35 is of low affinity compared to other Rab proteins; at least in case of RAB8A may bind 2 molecules of RAB8A simultaneously through a high and a low affinity binding site, respectively (PubMed:27552051). May interact with MAPK1/ERK2 (By similarity). Interacts with CORO1C; this interaction recruits MICAL2 to the actin filaments (PubMed:34106209).</text>
</comment>
<comment type="interaction">
    <interactant intactId="EBI-2804835">
        <id>O94851</id>
    </interactant>
    <interactant intactId="EBI-77613">
        <id>P05067</id>
        <label>APP</label>
    </interactant>
    <organismsDiffer>false</organismsDiffer>
    <experiments>3</experiments>
</comment>
<comment type="interaction">
    <interactant intactId="EBI-2804835">
        <id>O94851</id>
    </interactant>
    <interactant intactId="EBI-702390">
        <id>Q9UBB4</id>
        <label>ATXN10</label>
    </interactant>
    <organismsDiffer>false</organismsDiffer>
    <experiments>3</experiments>
</comment>
<comment type="interaction">
    <interactant intactId="EBI-2804835">
        <id>O94851</id>
    </interactant>
    <interactant intactId="EBI-946046">
        <id>P54252</id>
        <label>ATXN3</label>
    </interactant>
    <organismsDiffer>false</organismsDiffer>
    <experiments>3</experiments>
</comment>
<comment type="interaction">
    <interactant intactId="EBI-2804835">
        <id>O94851</id>
    </interactant>
    <interactant intactId="EBI-744302">
        <id>P14136</id>
        <label>GFAP</label>
    </interactant>
    <organismsDiffer>false</organismsDiffer>
    <experiments>3</experiments>
</comment>
<comment type="interaction">
    <interactant intactId="EBI-2804835">
        <id>O94851</id>
    </interactant>
    <interactant intactId="EBI-466029">
        <id>P42858</id>
        <label>HTT</label>
    </interactant>
    <organismsDiffer>false</organismsDiffer>
    <experiments>3</experiments>
</comment>
<comment type="interaction">
    <interactant intactId="EBI-2804835">
        <id>O94851</id>
    </interactant>
    <interactant intactId="EBI-1055254">
        <id>Q8WXH2</id>
        <label>JPH3</label>
    </interactant>
    <organismsDiffer>false</organismsDiffer>
    <experiments>3</experiments>
</comment>
<comment type="interaction">
    <interactant intactId="EBI-2804835">
        <id>O94851</id>
    </interactant>
    <interactant intactId="EBI-1391623">
        <id>P29474</id>
        <label>NOS3</label>
    </interactant>
    <organismsDiffer>false</organismsDiffer>
    <experiments>3</experiments>
</comment>
<comment type="interaction">
    <interactant intactId="EBI-2804835">
        <id>O94851</id>
    </interactant>
    <interactant intactId="EBI-2010251">
        <id>P49810</id>
        <label>PSEN2</label>
    </interactant>
    <organismsDiffer>false</organismsDiffer>
    <experiments>3</experiments>
</comment>
<comment type="subcellular location">
    <subcellularLocation>
        <location evidence="11">Nucleus</location>
    </subcellularLocation>
    <subcellularLocation>
        <location evidence="2">Cytoplasm</location>
    </subcellularLocation>
</comment>
<comment type="alternative products">
    <event type="alternative splicing"/>
    <isoform>
        <id>O94851-7</id>
        <name>7</name>
        <sequence type="displayed"/>
    </isoform>
    <isoform>
        <id>O94851-1</id>
        <name>1</name>
        <sequence type="described" ref="VSP_061297 VSP_061298"/>
    </isoform>
    <isoform>
        <id>O94851-2</id>
        <name>2</name>
        <sequence type="described" ref="VSP_061291 VSP_061292 VSP_061296 VSP_061299"/>
    </isoform>
    <isoform>
        <id>O94851-3</id>
        <name>3</name>
        <sequence type="described" ref="VSP_061294 VSP_061297 VSP_061298"/>
    </isoform>
    <isoform>
        <id>O94851-4</id>
        <name>4</name>
        <sequence type="described" ref="VSP_061293 VSP_061295 VSP_061296 VSP_061299"/>
    </isoform>
    <isoform>
        <id>O94851-5</id>
        <name>5</name>
        <sequence type="described" ref="VSP_061293 VSP_061297 VSP_061298"/>
    </isoform>
    <isoform>
        <id>O94851-6</id>
        <name>6</name>
        <sequence type="described" ref="VSP_061292 VSP_061296 VSP_061299"/>
    </isoform>
</comment>
<comment type="domain">
    <text evidence="12">The C-terminal RAB-binding domain (RBD) (1796-1945), also described as bivalent Mical/EHBP Rab binding (bMERB) domain, mediates binding to predominantly RAB8A, RAB10, RAB13 and RAB15 (in their GTP-bound forms).</text>
</comment>
<comment type="similarity">
    <text evidence="15">Belongs to the Mical family.</text>
</comment>
<comment type="sequence caution" evidence="15">
    <conflict type="erroneous initiation">
        <sequence resource="EMBL-CDS" id="BAA34470"/>
    </conflict>
    <text>Extended N-terminus.</text>
</comment>
<comment type="sequence caution" evidence="15">
    <conflict type="erroneous initiation">
        <sequence resource="EMBL-CDS" id="BAB55422"/>
    </conflict>
    <text>Truncated N-terminus.</text>
</comment>
<evidence type="ECO:0000250" key="1">
    <source>
        <dbReference type="UniProtKB" id="Q4G091"/>
    </source>
</evidence>
<evidence type="ECO:0000250" key="2">
    <source>
        <dbReference type="UniProtKB" id="Q8BML1"/>
    </source>
</evidence>
<evidence type="ECO:0000250" key="3">
    <source>
        <dbReference type="UniProtKB" id="Q8TDZ2"/>
    </source>
</evidence>
<evidence type="ECO:0000250" key="4">
    <source>
        <dbReference type="UniProtKB" id="Q8VDP3"/>
    </source>
</evidence>
<evidence type="ECO:0000255" key="5">
    <source>
        <dbReference type="PROSITE-ProRule" id="PRU00044"/>
    </source>
</evidence>
<evidence type="ECO:0000255" key="6">
    <source>
        <dbReference type="PROSITE-ProRule" id="PRU00125"/>
    </source>
</evidence>
<evidence type="ECO:0000255" key="7">
    <source>
        <dbReference type="PROSITE-ProRule" id="PRU01195"/>
    </source>
</evidence>
<evidence type="ECO:0000256" key="8">
    <source>
        <dbReference type="SAM" id="MobiDB-lite"/>
    </source>
</evidence>
<evidence type="ECO:0000269" key="9">
    <source>
    </source>
</evidence>
<evidence type="ECO:0000269" key="10">
    <source>
    </source>
</evidence>
<evidence type="ECO:0000269" key="11">
    <source>
    </source>
</evidence>
<evidence type="ECO:0000269" key="12">
    <source>
    </source>
</evidence>
<evidence type="ECO:0000269" key="13">
    <source>
    </source>
</evidence>
<evidence type="ECO:0000269" key="14">
    <source>
    </source>
</evidence>
<evidence type="ECO:0000305" key="15"/>
<evidence type="ECO:0000312" key="16">
    <source>
        <dbReference type="HGNC" id="HGNC:24693"/>
    </source>
</evidence>
<evidence type="ECO:0007744" key="17">
    <source>
        <dbReference type="PDB" id="2E9K"/>
    </source>
</evidence>
<evidence type="ECO:0007744" key="18">
    <source>
    </source>
</evidence>
<evidence type="ECO:0007829" key="19">
    <source>
        <dbReference type="PDB" id="2E9K"/>
    </source>
</evidence>
<evidence type="ECO:0007829" key="20">
    <source>
        <dbReference type="PDB" id="5SZH"/>
    </source>
</evidence>
<sequence>MGENEDEKQAQAGQVFENFVQASTCKGTLQAFNILTRHLDLDPLDHRNFYSKLKSKVTTWKAKALWYKLDKRGSHKEYKRGKSCTNTKCLIVGGGPCGLRTAIELAYLGAKVVVVEKRDSFSRNNVLHLWPFTIHDLRGLGAKKFYGKFCAGSIDHISIRQLQLILFKVALMLGVEIHVNVEFVKVLEPPEDQENQKIGWRAEFLPTDHSLSEFEFDVIIGADGRRNTLEGFRRKEFRGKLAIAITANFINRNSTAEAKVEEISGVAFIFNQKFFQDLKEETGIDLENIVYYKDCTHYFVMTAKKQSLLDKGVIINDYIDTEMLLCAENVNQDNLLSYAREAADFATNYQLPSLDFAMNHYGQPDVAMFDFTCMYASENAALVRERQAHQLLVALVGDSLLEPFWPMGTGCARGFLAAFDTAWMVKSWNQGTPPLELLAERESLYRLLPQTTPENINKNFEQYTLDPGTRYPNLNSHCVRPHQVKHLYITKELEHYPLERLGSVRRSVNLSRKESDIRPSKLLTWCQQQTEGYQHVNVTDLTTSWRSGLALCAIIHRFRPELINFDSLNEDDAVENNQLAFDVAEREFGIPPVTTGKEMASAQEPDKLSMVMYLSKFYELFRGTPLRPVDSWRKNYGENADLSLAKSSISNNYLNLTFPRKRTPRVDGQTGENDMNKRRRKGFTNLDEPSNFSSRSLGSNQECGSSKEGGNQNKVKSMANQLLAKFEESTRNPSLMKQERRVSGIGKPVLCSSSGPPVHSCCPKPEEATPSPSPPLKRQFPSVVVTGHVLRELKQVSAGSECLSRPWRARAKSDLQLGGTENFATLPSTRPRAQALSGVLWRLQQVEEKILQKRAQNLANREFHTKNIKEKAAHLASMFGHGDFPQNKLLSKGLSHTHPPSPPSRLPSPDPAASSSPSTVDSASPARKEKKSPSGFHFHPSHLRTVHPQLTVGKVSSGIGAAAEVLVNLYMNDHRPKAQATSPDLESMRKSFPLNLGGSDTCYFCKKRVYVMERLSAEGHFFHRECFRCSICATTLRLAAYTFDCDEGKFYCKPHFIHCKTNSKQRKRRAELKQQREEEATWQEQEAPRRDTPTESSCAVAAIGTLEGSPPDEPTSPKRPKSISEPQHSDAEGDAASPLPSEWTSVRISPGEEAAGQDVLAVRVLVTSEDSSSDTESDYGGSEGSHTEPCEEKPWRPGSPHLPHTSLGEALSRAVSPQCPEEPRAVHAALQRANSFQSPTPSKYQNWRREFWWSLTPVNKRTMSPPKDPSPSLPLPSSSSHSSSPPSSSSTSVSGNAPDGSSPPQMTASEPLSQVSRGHPSPPTPNFRRRAVAQGAPREIPLYLPHHPKPEWAEYCLVSPGEDGLSDPAEMTSDECQPAEAPLGDIGSNHRDPHPIWGKDRSWTGQELSPLAGEDREKGSTGARKEEEGGPVLVKEKLGLKKLVLTQEQKTMLLDWNDSIPESVHLKAGERISQKSAENGRGGRVLKPVRPLLLPRAAGEPLPTQRGAQEKMGTPAEQAQGERNVPPPKSPLRLIANAIRRSLEPLLSNSEGGKKAWAKQESKTLPAQACTRSFSLRKTNSNKDGDQHSPGRNQSSAFSPPDPALRTHSLPNRPSKVFPALRSPPCSKIEDVPTLLEKVSLQENFPDASKPPKKRISLFSSLRLKDKSFESFLQESRQRKDIRDLFGSPKRKVLPEDSAQALEKLLQPFKSTSLRQAAPPPPPPPPPPPPPPTAGGADSKNFPLRAQVTEASSSASSTSSSSADEEFDPQLSLQLKEKKTLRRRKKLEKAMKQLVKQEELKRLYKAQAIQRQLEEVEERQRASEIQGVRLEKALRGEADSGTQDEAQLLQEWFKLVLEKNKLMRYESELLIMAQELELEDHQSRLEQKLREKMLKEESQKDEKDLNEEQEVFTELMQVIEQRDKLVDSLEEQRIREKAEDQHFESFVFSRGCQLSRT</sequence>
<proteinExistence type="evidence at protein level"/>
<gene>
    <name evidence="16" type="primary">MICAL2</name>
    <name type="synonym">KIAA0750</name>
    <name type="synonym">MICAL2PV1</name>
    <name type="synonym">MICAL2PV2</name>
    <name type="synonym">MICALCL</name>
</gene>
<dbReference type="EC" id="1.14.13.225" evidence="11 13 14"/>
<dbReference type="EMBL" id="AB110785">
    <property type="protein sequence ID" value="BAD83656.1"/>
    <property type="molecule type" value="mRNA"/>
</dbReference>
<dbReference type="EMBL" id="AB110786">
    <property type="protein sequence ID" value="BAD83657.1"/>
    <property type="molecule type" value="mRNA"/>
</dbReference>
<dbReference type="EMBL" id="AB018293">
    <property type="protein sequence ID" value="BAA34470.2"/>
    <property type="status" value="ALT_INIT"/>
    <property type="molecule type" value="mRNA"/>
</dbReference>
<dbReference type="EMBL" id="AK027872">
    <property type="protein sequence ID" value="BAB55422.1"/>
    <property type="status" value="ALT_INIT"/>
    <property type="molecule type" value="mRNA"/>
</dbReference>
<dbReference type="EMBL" id="AK123671">
    <property type="protein sequence ID" value="BAC85674.1"/>
    <property type="molecule type" value="mRNA"/>
</dbReference>
<dbReference type="EMBL" id="AK294845">
    <property type="protein sequence ID" value="BAG57951.1"/>
    <property type="molecule type" value="mRNA"/>
</dbReference>
<dbReference type="EMBL" id="AK302893">
    <property type="protein sequence ID" value="BAH13835.1"/>
    <property type="molecule type" value="mRNA"/>
</dbReference>
<dbReference type="EMBL" id="BX538021">
    <property type="protein sequence ID" value="CAD97967.1"/>
    <property type="molecule type" value="mRNA"/>
</dbReference>
<dbReference type="EMBL" id="BX641163">
    <property type="protein sequence ID" value="CAE46072.1"/>
    <property type="molecule type" value="mRNA"/>
</dbReference>
<dbReference type="EMBL" id="AC025106">
    <property type="status" value="NOT_ANNOTATED_CDS"/>
    <property type="molecule type" value="Genomic_DNA"/>
</dbReference>
<dbReference type="EMBL" id="AC025300">
    <property type="status" value="NOT_ANNOTATED_CDS"/>
    <property type="molecule type" value="Genomic_DNA"/>
</dbReference>
<dbReference type="EMBL" id="AC079329">
    <property type="status" value="NOT_ANNOTATED_CDS"/>
    <property type="molecule type" value="Genomic_DNA"/>
</dbReference>
<dbReference type="EMBL" id="KF455321">
    <property type="status" value="NOT_ANNOTATED_CDS"/>
    <property type="molecule type" value="Genomic_DNA"/>
</dbReference>
<dbReference type="EMBL" id="CH471064">
    <property type="protein sequence ID" value="EAW68528.1"/>
    <property type="molecule type" value="Genomic_DNA"/>
</dbReference>
<dbReference type="EMBL" id="CH471064">
    <property type="protein sequence ID" value="EAW68529.1"/>
    <property type="molecule type" value="Genomic_DNA"/>
</dbReference>
<dbReference type="EMBL" id="CH471064">
    <property type="protein sequence ID" value="EAW68531.1"/>
    <property type="molecule type" value="Genomic_DNA"/>
</dbReference>
<dbReference type="EMBL" id="BC044577">
    <property type="protein sequence ID" value="AAH44577.1"/>
    <property type="molecule type" value="mRNA"/>
</dbReference>
<dbReference type="EMBL" id="BK000462">
    <property type="protein sequence ID" value="DAA01341.1"/>
    <property type="molecule type" value="mRNA"/>
</dbReference>
<dbReference type="EMBL" id="BK000463">
    <property type="protein sequence ID" value="DAA01342.1"/>
    <property type="molecule type" value="mRNA"/>
</dbReference>
<dbReference type="CCDS" id="CCDS60726.1">
    <molecule id="O94851-3"/>
</dbReference>
<dbReference type="CCDS" id="CCDS60727.1">
    <molecule id="O94851-5"/>
</dbReference>
<dbReference type="CCDS" id="CCDS7809.1">
    <molecule id="O94851-1"/>
</dbReference>
<dbReference type="CCDS" id="CCDS91442.1">
    <molecule id="O94851-7"/>
</dbReference>
<dbReference type="CCDS" id="CCDS91443.1">
    <molecule id="O94851-6"/>
</dbReference>
<dbReference type="RefSeq" id="NP_001269592.1">
    <molecule id="O94851-1"/>
    <property type="nucleotide sequence ID" value="NM_001282663.2"/>
</dbReference>
<dbReference type="RefSeq" id="NP_001269593.1">
    <molecule id="O94851-3"/>
    <property type="nucleotide sequence ID" value="NM_001282664.1"/>
</dbReference>
<dbReference type="RefSeq" id="NP_001269594.1">
    <molecule id="O94851-5"/>
    <property type="nucleotide sequence ID" value="NM_001282665.1"/>
</dbReference>
<dbReference type="RefSeq" id="NP_001269595.1">
    <molecule id="O94851-4"/>
    <property type="nucleotide sequence ID" value="NM_001282666.1"/>
</dbReference>
<dbReference type="RefSeq" id="NP_001269596.1">
    <molecule id="O94851-6"/>
    <property type="nucleotide sequence ID" value="NM_001282667.1"/>
</dbReference>
<dbReference type="RefSeq" id="NP_001333221.1">
    <molecule id="O94851-1"/>
    <property type="nucleotide sequence ID" value="NM_001346292.2"/>
</dbReference>
<dbReference type="RefSeq" id="NP_001333222.1">
    <molecule id="O94851-3"/>
    <property type="nucleotide sequence ID" value="NM_001346293.2"/>
</dbReference>
<dbReference type="RefSeq" id="NP_001333223.1">
    <molecule id="O94851-3"/>
    <property type="nucleotide sequence ID" value="NM_001346294.2"/>
</dbReference>
<dbReference type="RefSeq" id="NP_001333224.1">
    <molecule id="O94851-3"/>
    <property type="nucleotide sequence ID" value="NM_001346295.2"/>
</dbReference>
<dbReference type="RefSeq" id="NP_001333225.1">
    <molecule id="O94851-3"/>
    <property type="nucleotide sequence ID" value="NM_001346296.2"/>
</dbReference>
<dbReference type="RefSeq" id="NP_001333226.1">
    <molecule id="O94851-3"/>
    <property type="nucleotide sequence ID" value="NM_001346297.2"/>
</dbReference>
<dbReference type="RefSeq" id="NP_001333227.1">
    <molecule id="O94851-3"/>
    <property type="nucleotide sequence ID" value="NM_001346298.2"/>
</dbReference>
<dbReference type="RefSeq" id="NP_001333228.1">
    <molecule id="O94851-3"/>
    <property type="nucleotide sequence ID" value="NM_001346299.2"/>
</dbReference>
<dbReference type="RefSeq" id="NP_001380866.1">
    <molecule id="O94851-7"/>
    <property type="nucleotide sequence ID" value="NM_001393937.1"/>
</dbReference>
<dbReference type="RefSeq" id="NP_055447.1">
    <molecule id="O94851-1"/>
    <property type="nucleotide sequence ID" value="NM_014632.4"/>
</dbReference>
<dbReference type="RefSeq" id="XP_016874078.1">
    <property type="nucleotide sequence ID" value="XM_017018589.1"/>
</dbReference>
<dbReference type="RefSeq" id="XP_016874079.1">
    <property type="nucleotide sequence ID" value="XM_017018590.1"/>
</dbReference>
<dbReference type="RefSeq" id="XP_016874080.1">
    <property type="nucleotide sequence ID" value="XM_017018591.1"/>
</dbReference>
<dbReference type="PDB" id="2E9K">
    <property type="method" value="NMR"/>
    <property type="chains" value="A=516-629"/>
</dbReference>
<dbReference type="PDB" id="5SZH">
    <property type="method" value="X-ray"/>
    <property type="resolution" value="2.30 A"/>
    <property type="chains" value="A=1796-1945"/>
</dbReference>
<dbReference type="PDB" id="5SZI">
    <property type="method" value="X-ray"/>
    <property type="resolution" value="2.85 A"/>
    <property type="chains" value="B=1796-1945"/>
</dbReference>
<dbReference type="PDB" id="5SZJ">
    <property type="method" value="X-ray"/>
    <property type="resolution" value="2.66 A"/>
    <property type="chains" value="B=1796-1945"/>
</dbReference>
<dbReference type="PDB" id="5SZK">
    <property type="method" value="X-ray"/>
    <property type="resolution" value="2.80 A"/>
    <property type="chains" value="A=1796-1945"/>
</dbReference>
<dbReference type="PDBsum" id="2E9K"/>
<dbReference type="PDBsum" id="5SZH"/>
<dbReference type="PDBsum" id="5SZI"/>
<dbReference type="PDBsum" id="5SZJ"/>
<dbReference type="PDBsum" id="5SZK"/>
<dbReference type="SMR" id="O94851"/>
<dbReference type="BioGRID" id="115003">
    <property type="interactions" value="39"/>
</dbReference>
<dbReference type="BioGRID" id="124385">
    <property type="interactions" value="2"/>
</dbReference>
<dbReference type="FunCoup" id="O94851">
    <property type="interactions" value="1345"/>
</dbReference>
<dbReference type="IntAct" id="O94851">
    <property type="interactions" value="29"/>
</dbReference>
<dbReference type="MINT" id="O94851"/>
<dbReference type="STRING" id="9606.ENSP00000256194"/>
<dbReference type="GlyGen" id="O94851">
    <property type="glycosylation" value="4 sites, 1 O-linked glycan (1 site)"/>
</dbReference>
<dbReference type="iPTMnet" id="O94851"/>
<dbReference type="PhosphoSitePlus" id="O94851"/>
<dbReference type="SwissPalm" id="O94851"/>
<dbReference type="BioMuta" id="MICAL2"/>
<dbReference type="BioMuta" id="MICALCL"/>
<dbReference type="DMDM" id="296439303"/>
<dbReference type="jPOST" id="O94851"/>
<dbReference type="MassIVE" id="O94851"/>
<dbReference type="PaxDb" id="9606-ENSP00000256186"/>
<dbReference type="PeptideAtlas" id="O94851"/>
<dbReference type="ProteomicsDB" id="50480">
    <molecule id="O94851-1"/>
</dbReference>
<dbReference type="ProteomicsDB" id="50481">
    <molecule id="O94851-2"/>
</dbReference>
<dbReference type="ProteomicsDB" id="50482">
    <molecule id="O94851-3"/>
</dbReference>
<dbReference type="ProteomicsDB" id="50483">
    <molecule id="O94851-4"/>
</dbReference>
<dbReference type="ProteomicsDB" id="50484">
    <molecule id="O94851-5"/>
</dbReference>
<dbReference type="ProteomicsDB" id="50485">
    <molecule id="O94851-6"/>
</dbReference>
<dbReference type="ProteomicsDB" id="68455"/>
<dbReference type="Pumba" id="O94851"/>
<dbReference type="Antibodypedia" id="24509">
    <property type="antibodies" value="153 antibodies from 23 providers"/>
</dbReference>
<dbReference type="DNASU" id="84953"/>
<dbReference type="DNASU" id="9645"/>
<dbReference type="Ensembl" id="ENST00000256194.8">
    <molecule id="O94851-1"/>
    <property type="protein sequence ID" value="ENSP00000256194.4"/>
    <property type="gene ID" value="ENSG00000133816.19"/>
</dbReference>
<dbReference type="Ensembl" id="ENST00000527546.5">
    <molecule id="O94851-5"/>
    <property type="protein sequence ID" value="ENSP00000433965.1"/>
    <property type="gene ID" value="ENSG00000133816.19"/>
</dbReference>
<dbReference type="Ensembl" id="ENST00000528931.5">
    <molecule id="O94851-6"/>
    <property type="protein sequence ID" value="ENSP00000499778.1"/>
    <property type="gene ID" value="ENSG00000133816.19"/>
</dbReference>
<dbReference type="Ensembl" id="ENST00000646065.1">
    <molecule id="O94851-7"/>
    <property type="protein sequence ID" value="ENSP00000494982.1"/>
    <property type="gene ID" value="ENSG00000133816.19"/>
</dbReference>
<dbReference type="Ensembl" id="ENST00000675839.1">
    <molecule id="O94851-3"/>
    <property type="protein sequence ID" value="ENSP00000502351.1"/>
    <property type="gene ID" value="ENSG00000133816.19"/>
</dbReference>
<dbReference type="Ensembl" id="ENST00000683283.1">
    <molecule id="O94851-1"/>
    <property type="protein sequence ID" value="ENSP00000507067.1"/>
    <property type="gene ID" value="ENSG00000133816.19"/>
</dbReference>
<dbReference type="Ensembl" id="ENST00000707072.1">
    <molecule id="O94851-4"/>
    <property type="protein sequence ID" value="ENSP00000516723.1"/>
    <property type="gene ID" value="ENSG00000133816.19"/>
</dbReference>
<dbReference type="GeneID" id="9645"/>
<dbReference type="KEGG" id="hsa:9645"/>
<dbReference type="MANE-Select" id="ENST00000683283.1">
    <molecule id="O94851-1"/>
    <property type="protein sequence ID" value="ENSP00000507067.1"/>
    <property type="RefSeq nucleotide sequence ID" value="NM_001282663.2"/>
    <property type="RefSeq protein sequence ID" value="NP_001269592.1"/>
</dbReference>
<dbReference type="UCSC" id="uc001mjz.5">
    <molecule id="O94851-7"/>
    <property type="organism name" value="human"/>
</dbReference>
<dbReference type="AGR" id="HGNC:24693"/>
<dbReference type="CTD" id="9645"/>
<dbReference type="DisGeNET" id="9645"/>
<dbReference type="GeneCards" id="MICAL2"/>
<dbReference type="HGNC" id="HGNC:24693">
    <property type="gene designation" value="MICAL2"/>
</dbReference>
<dbReference type="HPA" id="ENSG00000133816">
    <property type="expression patterns" value="Tissue enriched (brain)"/>
</dbReference>
<dbReference type="MIM" id="608881">
    <property type="type" value="gene"/>
</dbReference>
<dbReference type="neXtProt" id="NX_O94851"/>
<dbReference type="OpenTargets" id="ENSG00000133816"/>
<dbReference type="PharmGKB" id="PA142671453"/>
<dbReference type="VEuPathDB" id="HostDB:ENSG00000133816"/>
<dbReference type="eggNOG" id="ENOG502QWDX">
    <property type="taxonomic scope" value="Eukaryota"/>
</dbReference>
<dbReference type="eggNOG" id="KOG1700">
    <property type="taxonomic scope" value="Eukaryota"/>
</dbReference>
<dbReference type="GeneTree" id="ENSGT00940000158780"/>
<dbReference type="HOGENOM" id="CLU_000329_0_1_1"/>
<dbReference type="InParanoid" id="O94851"/>
<dbReference type="OMA" id="CEHEQSG"/>
<dbReference type="OrthoDB" id="20799at2759"/>
<dbReference type="PAN-GO" id="O94851">
    <property type="GO annotations" value="0 GO annotations based on evolutionary models"/>
</dbReference>
<dbReference type="PhylomeDB" id="O94851"/>
<dbReference type="TreeFam" id="TF324129"/>
<dbReference type="TreeFam" id="TF336446"/>
<dbReference type="PathwayCommons" id="O94851"/>
<dbReference type="SignaLink" id="O94851"/>
<dbReference type="BioGRID-ORCS" id="84953">
    <property type="hits" value="16 hits in 1142 CRISPR screens"/>
</dbReference>
<dbReference type="BioGRID-ORCS" id="9645">
    <property type="hits" value="9 hits in 1150 CRISPR screens"/>
</dbReference>
<dbReference type="ChiTaRS" id="MICAL2">
    <property type="organism name" value="human"/>
</dbReference>
<dbReference type="ChiTaRS" id="MICALCL">
    <property type="organism name" value="human"/>
</dbReference>
<dbReference type="EvolutionaryTrace" id="O94851"/>
<dbReference type="GeneWiki" id="MICAL2"/>
<dbReference type="GenomeRNAi" id="9645"/>
<dbReference type="Pharos" id="O94851">
    <property type="development level" value="Tbio"/>
</dbReference>
<dbReference type="PRO" id="PR:O94851"/>
<dbReference type="Proteomes" id="UP000005640">
    <property type="component" value="Chromosome 11"/>
</dbReference>
<dbReference type="RNAct" id="O94851">
    <property type="molecule type" value="protein"/>
</dbReference>
<dbReference type="Bgee" id="ENSG00000133816">
    <property type="expression patterns" value="Expressed in cerebellar hemisphere and 215 other cell types or tissues"/>
</dbReference>
<dbReference type="ExpressionAtlas" id="O94851">
    <property type="expression patterns" value="baseline and differential"/>
</dbReference>
<dbReference type="GO" id="GO:0005884">
    <property type="term" value="C:actin filament"/>
    <property type="evidence" value="ECO:0000314"/>
    <property type="project" value="UniProt"/>
</dbReference>
<dbReference type="GO" id="GO:0005737">
    <property type="term" value="C:cytoplasm"/>
    <property type="evidence" value="ECO:0000250"/>
    <property type="project" value="UniProtKB"/>
</dbReference>
<dbReference type="GO" id="GO:0005634">
    <property type="term" value="C:nucleus"/>
    <property type="evidence" value="ECO:0000314"/>
    <property type="project" value="UniProtKB"/>
</dbReference>
<dbReference type="GO" id="GO:0003779">
    <property type="term" value="F:actin binding"/>
    <property type="evidence" value="ECO:0000314"/>
    <property type="project" value="UniProtKB"/>
</dbReference>
<dbReference type="GO" id="GO:0120501">
    <property type="term" value="F:F-actin monooxygenase activity"/>
    <property type="evidence" value="ECO:0007669"/>
    <property type="project" value="UniProtKB-EC"/>
</dbReference>
<dbReference type="GO" id="GO:0071949">
    <property type="term" value="F:FAD binding"/>
    <property type="evidence" value="ECO:0000250"/>
    <property type="project" value="UniProtKB"/>
</dbReference>
<dbReference type="GO" id="GO:0046872">
    <property type="term" value="F:metal ion binding"/>
    <property type="evidence" value="ECO:0007669"/>
    <property type="project" value="UniProtKB-KW"/>
</dbReference>
<dbReference type="GO" id="GO:0051019">
    <property type="term" value="F:mitogen-activated protein kinase binding"/>
    <property type="evidence" value="ECO:0000250"/>
    <property type="project" value="UniProtKB"/>
</dbReference>
<dbReference type="GO" id="GO:0004497">
    <property type="term" value="F:monooxygenase activity"/>
    <property type="evidence" value="ECO:0000314"/>
    <property type="project" value="UniProt"/>
</dbReference>
<dbReference type="GO" id="GO:0016174">
    <property type="term" value="F:NAD(P)H oxidase H2O2-forming activity"/>
    <property type="evidence" value="ECO:0007669"/>
    <property type="project" value="Ensembl"/>
</dbReference>
<dbReference type="GO" id="GO:0016491">
    <property type="term" value="F:oxidoreductase activity"/>
    <property type="evidence" value="ECO:0000314"/>
    <property type="project" value="UniProtKB"/>
</dbReference>
<dbReference type="GO" id="GO:0016709">
    <property type="term" value="F:oxidoreductase activity, acting on paired donors, with incorporation or reduction of molecular oxygen, NAD(P)H as one donor, and incorporation of one atom of oxygen"/>
    <property type="evidence" value="ECO:0000250"/>
    <property type="project" value="UniProtKB"/>
</dbReference>
<dbReference type="GO" id="GO:0030042">
    <property type="term" value="P:actin filament depolymerization"/>
    <property type="evidence" value="ECO:0000314"/>
    <property type="project" value="UniProtKB"/>
</dbReference>
<dbReference type="GO" id="GO:0007010">
    <property type="term" value="P:cytoskeleton organization"/>
    <property type="evidence" value="ECO:0000314"/>
    <property type="project" value="UniProtKB"/>
</dbReference>
<dbReference type="GO" id="GO:0007507">
    <property type="term" value="P:heart development"/>
    <property type="evidence" value="ECO:0000250"/>
    <property type="project" value="UniProtKB"/>
</dbReference>
<dbReference type="GO" id="GO:0001947">
    <property type="term" value="P:heart looping"/>
    <property type="evidence" value="ECO:0000250"/>
    <property type="project" value="UniProtKB"/>
</dbReference>
<dbReference type="GO" id="GO:0045944">
    <property type="term" value="P:positive regulation of transcription by RNA polymerase II"/>
    <property type="evidence" value="ECO:0000315"/>
    <property type="project" value="UniProtKB"/>
</dbReference>
<dbReference type="GO" id="GO:0019417">
    <property type="term" value="P:sulfur oxidation"/>
    <property type="evidence" value="ECO:0000250"/>
    <property type="project" value="UniProtKB"/>
</dbReference>
<dbReference type="CDD" id="cd21195">
    <property type="entry name" value="CH_MICAL2_3-like"/>
    <property type="match status" value="1"/>
</dbReference>
<dbReference type="CDD" id="cd09439">
    <property type="entry name" value="LIM_Mical"/>
    <property type="match status" value="1"/>
</dbReference>
<dbReference type="FunFam" id="3.50.50.60:FF:000004">
    <property type="entry name" value="protein-methionine sulfoxide oxidase MICAL2 isoform X1"/>
    <property type="match status" value="1"/>
</dbReference>
<dbReference type="FunFam" id="1.10.418.10:FF:000026">
    <property type="entry name" value="protein-methionine sulfoxide oxidase MICAL3 isoform X1"/>
    <property type="match status" value="1"/>
</dbReference>
<dbReference type="FunFam" id="2.10.110.10:FF:000043">
    <property type="entry name" value="protein-methionine sulfoxide oxidase MICAL3 isoform X2"/>
    <property type="match status" value="1"/>
</dbReference>
<dbReference type="Gene3D" id="1.10.418.10">
    <property type="entry name" value="Calponin-like domain"/>
    <property type="match status" value="1"/>
</dbReference>
<dbReference type="Gene3D" id="2.10.110.10">
    <property type="entry name" value="Cysteine Rich Protein"/>
    <property type="match status" value="1"/>
</dbReference>
<dbReference type="Gene3D" id="3.50.50.60">
    <property type="entry name" value="FAD/NAD(P)-binding domain"/>
    <property type="match status" value="1"/>
</dbReference>
<dbReference type="InterPro" id="IPR022735">
    <property type="entry name" value="bMERB_dom"/>
</dbReference>
<dbReference type="InterPro" id="IPR001715">
    <property type="entry name" value="CH_dom"/>
</dbReference>
<dbReference type="InterPro" id="IPR036872">
    <property type="entry name" value="CH_dom_sf"/>
</dbReference>
<dbReference type="InterPro" id="IPR050540">
    <property type="entry name" value="F-actin_Monoox_Mical"/>
</dbReference>
<dbReference type="InterPro" id="IPR002938">
    <property type="entry name" value="FAD-bd"/>
</dbReference>
<dbReference type="InterPro" id="IPR036188">
    <property type="entry name" value="FAD/NAD-bd_sf"/>
</dbReference>
<dbReference type="InterPro" id="IPR016103">
    <property type="entry name" value="ProQ/FinO"/>
</dbReference>
<dbReference type="InterPro" id="IPR001781">
    <property type="entry name" value="Znf_LIM"/>
</dbReference>
<dbReference type="PANTHER" id="PTHR23167:SF39">
    <property type="entry name" value="[F-ACTIN]-MONOOXYGENASE MICAL2"/>
    <property type="match status" value="1"/>
</dbReference>
<dbReference type="PANTHER" id="PTHR23167">
    <property type="entry name" value="CALPONIN HOMOLOGY DOMAIN-CONTAINING PROTEIN DDB_G0272472-RELATED"/>
    <property type="match status" value="1"/>
</dbReference>
<dbReference type="Pfam" id="PF12130">
    <property type="entry name" value="bMERB_dom"/>
    <property type="match status" value="1"/>
</dbReference>
<dbReference type="Pfam" id="PF00307">
    <property type="entry name" value="CH"/>
    <property type="match status" value="1"/>
</dbReference>
<dbReference type="Pfam" id="PF01494">
    <property type="entry name" value="FAD_binding_3"/>
    <property type="match status" value="1"/>
</dbReference>
<dbReference type="Pfam" id="PF00412">
    <property type="entry name" value="LIM"/>
    <property type="match status" value="1"/>
</dbReference>
<dbReference type="Pfam" id="PF25413">
    <property type="entry name" value="Rossman_Mical"/>
    <property type="match status" value="1"/>
</dbReference>
<dbReference type="PRINTS" id="PR00420">
    <property type="entry name" value="RNGMNOXGNASE"/>
</dbReference>
<dbReference type="SMART" id="SM00033">
    <property type="entry name" value="CH"/>
    <property type="match status" value="1"/>
</dbReference>
<dbReference type="SMART" id="SM01203">
    <property type="entry name" value="DUF3585"/>
    <property type="match status" value="1"/>
</dbReference>
<dbReference type="SMART" id="SM00132">
    <property type="entry name" value="LIM"/>
    <property type="match status" value="1"/>
</dbReference>
<dbReference type="SMART" id="SM00945">
    <property type="entry name" value="ProQ"/>
    <property type="match status" value="1"/>
</dbReference>
<dbReference type="SUPFAM" id="SSF47576">
    <property type="entry name" value="Calponin-homology domain, CH-domain"/>
    <property type="match status" value="1"/>
</dbReference>
<dbReference type="SUPFAM" id="SSF51905">
    <property type="entry name" value="FAD/NAD(P)-binding domain"/>
    <property type="match status" value="1"/>
</dbReference>
<dbReference type="SUPFAM" id="SSF101447">
    <property type="entry name" value="Formin homology 2 domain (FH2 domain)"/>
    <property type="match status" value="1"/>
</dbReference>
<dbReference type="SUPFAM" id="SSF57716">
    <property type="entry name" value="Glucocorticoid receptor-like (DNA-binding domain)"/>
    <property type="match status" value="1"/>
</dbReference>
<dbReference type="PROSITE" id="PS51848">
    <property type="entry name" value="BMERB"/>
    <property type="match status" value="1"/>
</dbReference>
<dbReference type="PROSITE" id="PS50021">
    <property type="entry name" value="CH"/>
    <property type="match status" value="1"/>
</dbReference>
<dbReference type="PROSITE" id="PS00478">
    <property type="entry name" value="LIM_DOMAIN_1"/>
    <property type="match status" value="1"/>
</dbReference>
<dbReference type="PROSITE" id="PS50023">
    <property type="entry name" value="LIM_DOMAIN_2"/>
    <property type="match status" value="1"/>
</dbReference>
<organism>
    <name type="scientific">Homo sapiens</name>
    <name type="common">Human</name>
    <dbReference type="NCBI Taxonomy" id="9606"/>
    <lineage>
        <taxon>Eukaryota</taxon>
        <taxon>Metazoa</taxon>
        <taxon>Chordata</taxon>
        <taxon>Craniata</taxon>
        <taxon>Vertebrata</taxon>
        <taxon>Euteleostomi</taxon>
        <taxon>Mammalia</taxon>
        <taxon>Eutheria</taxon>
        <taxon>Euarchontoglires</taxon>
        <taxon>Primates</taxon>
        <taxon>Haplorrhini</taxon>
        <taxon>Catarrhini</taxon>
        <taxon>Hominidae</taxon>
        <taxon>Homo</taxon>
    </lineage>
</organism>
<reference key="1">
    <citation type="journal article" date="2006" name="Clin. Cancer Res.">
        <title>Expression of novel molecules, MICAL2-PV (MICAL2 prostate cancer variants), increases with high Gleason score and prostate cancer progression.</title>
        <authorList>
            <person name="Ashida S."/>
            <person name="Furihata M."/>
            <person name="Katagiri T."/>
            <person name="Tamura K."/>
            <person name="Anazawa Y."/>
            <person name="Yoshioka H."/>
            <person name="Miki T."/>
            <person name="Fujioka T."/>
            <person name="Shuin T."/>
            <person name="Nakamura Y."/>
            <person name="Nakagawa H."/>
        </authorList>
    </citation>
    <scope>NUCLEOTIDE SEQUENCE [MRNA] (ISOFORMS 4 AND 6)</scope>
    <source>
        <tissue>Prostate</tissue>
    </source>
</reference>
<reference key="2">
    <citation type="journal article" date="1998" name="DNA Res.">
        <title>Prediction of the coding sequences of unidentified human genes. XI. The complete sequences of 100 new cDNA clones from brain which code for large proteins in vitro.</title>
        <authorList>
            <person name="Nagase T."/>
            <person name="Ishikawa K."/>
            <person name="Suyama M."/>
            <person name="Kikuno R."/>
            <person name="Miyajima N."/>
            <person name="Tanaka A."/>
            <person name="Kotani H."/>
            <person name="Nomura N."/>
            <person name="Ohara O."/>
        </authorList>
    </citation>
    <scope>NUCLEOTIDE SEQUENCE [LARGE SCALE MRNA] (ISOFORM 1)</scope>
    <source>
        <tissue>Brain</tissue>
    </source>
</reference>
<reference key="3">
    <citation type="journal article" date="2004" name="Nat. Genet.">
        <title>Complete sequencing and characterization of 21,243 full-length human cDNAs.</title>
        <authorList>
            <person name="Ota T."/>
            <person name="Suzuki Y."/>
            <person name="Nishikawa T."/>
            <person name="Otsuki T."/>
            <person name="Sugiyama T."/>
            <person name="Irie R."/>
            <person name="Wakamatsu A."/>
            <person name="Hayashi K."/>
            <person name="Sato H."/>
            <person name="Nagai K."/>
            <person name="Kimura K."/>
            <person name="Makita H."/>
            <person name="Sekine M."/>
            <person name="Obayashi M."/>
            <person name="Nishi T."/>
            <person name="Shibahara T."/>
            <person name="Tanaka T."/>
            <person name="Ishii S."/>
            <person name="Yamamoto J."/>
            <person name="Saito K."/>
            <person name="Kawai Y."/>
            <person name="Isono Y."/>
            <person name="Nakamura Y."/>
            <person name="Nagahari K."/>
            <person name="Murakami K."/>
            <person name="Yasuda T."/>
            <person name="Iwayanagi T."/>
            <person name="Wagatsuma M."/>
            <person name="Shiratori A."/>
            <person name="Sudo H."/>
            <person name="Hosoiri T."/>
            <person name="Kaku Y."/>
            <person name="Kodaira H."/>
            <person name="Kondo H."/>
            <person name="Sugawara M."/>
            <person name="Takahashi M."/>
            <person name="Kanda K."/>
            <person name="Yokoi T."/>
            <person name="Furuya T."/>
            <person name="Kikkawa E."/>
            <person name="Omura Y."/>
            <person name="Abe K."/>
            <person name="Kamihara K."/>
            <person name="Katsuta N."/>
            <person name="Sato K."/>
            <person name="Tanikawa M."/>
            <person name="Yamazaki M."/>
            <person name="Ninomiya K."/>
            <person name="Ishibashi T."/>
            <person name="Yamashita H."/>
            <person name="Murakawa K."/>
            <person name="Fujimori K."/>
            <person name="Tanai H."/>
            <person name="Kimata M."/>
            <person name="Watanabe M."/>
            <person name="Hiraoka S."/>
            <person name="Chiba Y."/>
            <person name="Ishida S."/>
            <person name="Ono Y."/>
            <person name="Takiguchi S."/>
            <person name="Watanabe S."/>
            <person name="Yosida M."/>
            <person name="Hotuta T."/>
            <person name="Kusano J."/>
            <person name="Kanehori K."/>
            <person name="Takahashi-Fujii A."/>
            <person name="Hara H."/>
            <person name="Tanase T.-O."/>
            <person name="Nomura Y."/>
            <person name="Togiya S."/>
            <person name="Komai F."/>
            <person name="Hara R."/>
            <person name="Takeuchi K."/>
            <person name="Arita M."/>
            <person name="Imose N."/>
            <person name="Musashino K."/>
            <person name="Yuuki H."/>
            <person name="Oshima A."/>
            <person name="Sasaki N."/>
            <person name="Aotsuka S."/>
            <person name="Yoshikawa Y."/>
            <person name="Matsunawa H."/>
            <person name="Ichihara T."/>
            <person name="Shiohata N."/>
            <person name="Sano S."/>
            <person name="Moriya S."/>
            <person name="Momiyama H."/>
            <person name="Satoh N."/>
            <person name="Takami S."/>
            <person name="Terashima Y."/>
            <person name="Suzuki O."/>
            <person name="Nakagawa S."/>
            <person name="Senoh A."/>
            <person name="Mizoguchi H."/>
            <person name="Goto Y."/>
            <person name="Shimizu F."/>
            <person name="Wakebe H."/>
            <person name="Hishigaki H."/>
            <person name="Watanabe T."/>
            <person name="Sugiyama A."/>
            <person name="Takemoto M."/>
            <person name="Kawakami B."/>
            <person name="Yamazaki M."/>
            <person name="Watanabe K."/>
            <person name="Kumagai A."/>
            <person name="Itakura S."/>
            <person name="Fukuzumi Y."/>
            <person name="Fujimori Y."/>
            <person name="Komiyama M."/>
            <person name="Tashiro H."/>
            <person name="Tanigami A."/>
            <person name="Fujiwara T."/>
            <person name="Ono T."/>
            <person name="Yamada K."/>
            <person name="Fujii Y."/>
            <person name="Ozaki K."/>
            <person name="Hirao M."/>
            <person name="Ohmori Y."/>
            <person name="Kawabata A."/>
            <person name="Hikiji T."/>
            <person name="Kobatake N."/>
            <person name="Inagaki H."/>
            <person name="Ikema Y."/>
            <person name="Okamoto S."/>
            <person name="Okitani R."/>
            <person name="Kawakami T."/>
            <person name="Noguchi S."/>
            <person name="Itoh T."/>
            <person name="Shigeta K."/>
            <person name="Senba T."/>
            <person name="Matsumura K."/>
            <person name="Nakajima Y."/>
            <person name="Mizuno T."/>
            <person name="Morinaga M."/>
            <person name="Sasaki M."/>
            <person name="Togashi T."/>
            <person name="Oyama M."/>
            <person name="Hata H."/>
            <person name="Watanabe M."/>
            <person name="Komatsu T."/>
            <person name="Mizushima-Sugano J."/>
            <person name="Satoh T."/>
            <person name="Shirai Y."/>
            <person name="Takahashi Y."/>
            <person name="Nakagawa K."/>
            <person name="Okumura K."/>
            <person name="Nagase T."/>
            <person name="Nomura N."/>
            <person name="Kikuchi H."/>
            <person name="Masuho Y."/>
            <person name="Yamashita R."/>
            <person name="Nakai K."/>
            <person name="Yada T."/>
            <person name="Nakamura Y."/>
            <person name="Ohara O."/>
            <person name="Isogai T."/>
            <person name="Sugano S."/>
        </authorList>
    </citation>
    <scope>NUCLEOTIDE SEQUENCE [LARGE SCALE MRNA] (ISOFORMS 3 AND 5)</scope>
    <scope>NUCLEOTIDE SEQUENCE [LARGE SCALE MRNA] OF 1228-1957 (ISOFORM 7)</scope>
    <scope>VARIANTS PRO-1106; ILE-1332; SER-1355; THR-1567; GLY-1575; GLU-1631 AND PRO-1733</scope>
    <source>
        <tissue>Brain</tissue>
        <tissue>Testis</tissue>
    </source>
</reference>
<reference key="4">
    <citation type="journal article" date="2007" name="BMC Genomics">
        <title>The full-ORF clone resource of the German cDNA consortium.</title>
        <authorList>
            <person name="Bechtel S."/>
            <person name="Rosenfelder H."/>
            <person name="Duda A."/>
            <person name="Schmidt C.P."/>
            <person name="Ernst U."/>
            <person name="Wellenreuther R."/>
            <person name="Mehrle A."/>
            <person name="Schuster C."/>
            <person name="Bahr A."/>
            <person name="Bloecker H."/>
            <person name="Heubner D."/>
            <person name="Hoerlein A."/>
            <person name="Michel G."/>
            <person name="Wedler H."/>
            <person name="Koehrer K."/>
            <person name="Ottenwaelder B."/>
            <person name="Poustka A."/>
            <person name="Wiemann S."/>
            <person name="Schupp I."/>
        </authorList>
    </citation>
    <scope>NUCLEOTIDE SEQUENCE [LARGE SCALE MRNA] (ISOFORM 2)</scope>
    <source>
        <tissue>Colon endothelium</tissue>
        <tissue>Endometrium</tissue>
    </source>
</reference>
<reference key="5">
    <citation type="journal article" date="2006" name="Nature">
        <title>Human chromosome 11 DNA sequence and analysis including novel gene identification.</title>
        <authorList>
            <person name="Taylor T.D."/>
            <person name="Noguchi H."/>
            <person name="Totoki Y."/>
            <person name="Toyoda A."/>
            <person name="Kuroki Y."/>
            <person name="Dewar K."/>
            <person name="Lloyd C."/>
            <person name="Itoh T."/>
            <person name="Takeda T."/>
            <person name="Kim D.-W."/>
            <person name="She X."/>
            <person name="Barlow K.F."/>
            <person name="Bloom T."/>
            <person name="Bruford E."/>
            <person name="Chang J.L."/>
            <person name="Cuomo C.A."/>
            <person name="Eichler E."/>
            <person name="FitzGerald M.G."/>
            <person name="Jaffe D.B."/>
            <person name="LaButti K."/>
            <person name="Nicol R."/>
            <person name="Park H.-S."/>
            <person name="Seaman C."/>
            <person name="Sougnez C."/>
            <person name="Yang X."/>
            <person name="Zimmer A.R."/>
            <person name="Zody M.C."/>
            <person name="Birren B.W."/>
            <person name="Nusbaum C."/>
            <person name="Fujiyama A."/>
            <person name="Hattori M."/>
            <person name="Rogers J."/>
            <person name="Lander E.S."/>
            <person name="Sakaki Y."/>
        </authorList>
    </citation>
    <scope>NUCLEOTIDE SEQUENCE [LARGE SCALE GENOMIC DNA]</scope>
</reference>
<reference key="6">
    <citation type="submission" date="2005-09" db="EMBL/GenBank/DDBJ databases">
        <authorList>
            <person name="Mural R.J."/>
            <person name="Istrail S."/>
            <person name="Sutton G.G."/>
            <person name="Florea L."/>
            <person name="Halpern A.L."/>
            <person name="Mobarry C.M."/>
            <person name="Lippert R."/>
            <person name="Walenz B."/>
            <person name="Shatkay H."/>
            <person name="Dew I."/>
            <person name="Miller J.R."/>
            <person name="Flanigan M.J."/>
            <person name="Edwards N.J."/>
            <person name="Bolanos R."/>
            <person name="Fasulo D."/>
            <person name="Halldorsson B.V."/>
            <person name="Hannenhalli S."/>
            <person name="Turner R."/>
            <person name="Yooseph S."/>
            <person name="Lu F."/>
            <person name="Nusskern D.R."/>
            <person name="Shue B.C."/>
            <person name="Zheng X.H."/>
            <person name="Zhong F."/>
            <person name="Delcher A.L."/>
            <person name="Huson D.H."/>
            <person name="Kravitz S.A."/>
            <person name="Mouchard L."/>
            <person name="Reinert K."/>
            <person name="Remington K.A."/>
            <person name="Clark A.G."/>
            <person name="Waterman M.S."/>
            <person name="Eichler E.E."/>
            <person name="Adams M.D."/>
            <person name="Hunkapiller M.W."/>
            <person name="Myers E.W."/>
            <person name="Venter J.C."/>
        </authorList>
    </citation>
    <scope>NUCLEOTIDE SEQUENCE [LARGE SCALE GENOMIC DNA]</scope>
</reference>
<reference key="7">
    <citation type="journal article" date="2004" name="Genome Res.">
        <title>The status, quality, and expansion of the NIH full-length cDNA project: the Mammalian Gene Collection (MGC).</title>
        <authorList>
            <consortium name="The MGC Project Team"/>
        </authorList>
    </citation>
    <scope>NUCLEOTIDE SEQUENCE [LARGE SCALE MRNA] (ISOFORM 1)</scope>
    <source>
        <tissue>Brain</tissue>
    </source>
</reference>
<reference key="8">
    <citation type="journal article" date="2002" name="Cell">
        <title>MICALs, a family of conserved flavoprotein oxidoreductases, function in plexin-mediated axonal repulsion.</title>
        <authorList>
            <person name="Terman J.R."/>
            <person name="Mao T."/>
            <person name="Pasterkamp R.J."/>
            <person name="Yu H.-H."/>
            <person name="Kolodkin A.L."/>
        </authorList>
    </citation>
    <scope>GENE STRUCTURE</scope>
</reference>
<reference key="9">
    <citation type="journal article" date="2005" name="Biochem. Biophys. Res. Commun.">
        <title>The MICAL proteins and rab1: a possible link to the cytoskeleton?</title>
        <authorList>
            <person name="Fischer J."/>
            <person name="Weide T."/>
            <person name="Barnekow A."/>
        </authorList>
    </citation>
    <scope>INTERACTION WITH RAB1B</scope>
</reference>
<reference key="10">
    <citation type="journal article" date="2013" name="J. Proteome Res.">
        <title>Toward a comprehensive characterization of a human cancer cell phosphoproteome.</title>
        <authorList>
            <person name="Zhou H."/>
            <person name="Di Palma S."/>
            <person name="Preisinger C."/>
            <person name="Peng M."/>
            <person name="Polat A.N."/>
            <person name="Heck A.J."/>
            <person name="Mohammed S."/>
        </authorList>
    </citation>
    <scope>PHOSPHORYLATION [LARGE SCALE ANALYSIS] AT SER-631</scope>
    <scope>IDENTIFICATION BY MASS SPECTROMETRY [LARGE SCALE ANALYSIS]</scope>
    <source>
        <tissue>Erythroleukemia</tissue>
    </source>
</reference>
<reference key="11">
    <citation type="journal article" date="2014" name="Cell">
        <title>Redox modification of nuclear actin by MICAL-2 regulates SRF signaling.</title>
        <authorList>
            <person name="Lundquist M.R."/>
            <person name="Storaska A.J."/>
            <person name="Liu T.C."/>
            <person name="Larsen S.D."/>
            <person name="Evans T."/>
            <person name="Neubig R.R."/>
            <person name="Jaffrey S.R."/>
        </authorList>
    </citation>
    <scope>FUNCTION</scope>
    <scope>CATALYTIC ACTIVITY</scope>
    <scope>SUBCELLULAR LOCATION</scope>
    <scope>NUCLEAR LOCALIZATION SIGNAL</scope>
    <scope>MUTAGENESIS OF GLY-95 AND 677-LYS--LYS-681</scope>
    <scope>ACTIVITY REGULATION</scope>
</reference>
<reference key="12">
    <citation type="journal article" date="2014" name="J. Proteomics">
        <title>An enzyme assisted RP-RPLC approach for in-depth analysis of human liver phosphoproteome.</title>
        <authorList>
            <person name="Bian Y."/>
            <person name="Song C."/>
            <person name="Cheng K."/>
            <person name="Dong M."/>
            <person name="Wang F."/>
            <person name="Huang J."/>
            <person name="Sun D."/>
            <person name="Wang L."/>
            <person name="Ye M."/>
            <person name="Zou H."/>
        </authorList>
    </citation>
    <scope>IDENTIFICATION BY MASS SPECTROMETRY [LARGE SCALE ANALYSIS]</scope>
    <source>
        <tissue>Liver</tissue>
    </source>
</reference>
<reference key="13">
    <citation type="journal article" date="2018" name="Sci. Rep.">
        <title>The MICALs are a Family of F-actin Dismantling Oxidoreductases Conserved from Drosophila to Humans.</title>
        <authorList>
            <person name="Wu H."/>
            <person name="Yesilyurt H.G."/>
            <person name="Yoon J."/>
            <person name="Terman J.R."/>
        </authorList>
    </citation>
    <scope>FUNCTION</scope>
    <scope>CATALYTIC ACTIVITY</scope>
</reference>
<reference key="14">
    <citation type="journal article" date="2021" name="J. Cell Biol.">
        <title>MICAL2 enhances branched actin network disassembly by oxidizing Arp3B-containing Arp2/3 complexes.</title>
        <authorList>
            <person name="Galloni C."/>
            <person name="Carra D."/>
            <person name="Abella J.V.G."/>
            <person name="Kjaer S."/>
            <person name="Singaravelu P."/>
            <person name="Barry D.J."/>
            <person name="Kogata N."/>
            <person name="Guerin C."/>
            <person name="Blanchoin L."/>
            <person name="Way M."/>
        </authorList>
    </citation>
    <scope>FUNCTION</scope>
    <scope>CATALYTIC ACTIVITY</scope>
    <scope>INTERACTION WITH CORO1C</scope>
</reference>
<reference key="15">
    <citation type="submission" date="2007-07" db="PDB data bank">
        <title>Solution structure of the CH domain from human MICAL-2.</title>
        <authorList>
            <consortium name="RIKEN structural genomics initiative (RSGI)"/>
        </authorList>
    </citation>
    <scope>STRUCTURE BY NMR OF 511-629</scope>
</reference>
<reference evidence="17" key="16">
    <citation type="submission" date="2007-01" db="PDB data bank">
        <title>Solution structure of the CH domain from human MICAL-2.</title>
        <authorList>
            <person name="Tomizawa T."/>
            <person name="Tochio N."/>
            <person name="Koshiba S."/>
            <person name="Watanabe S."/>
            <person name="Harada T."/>
            <person name="Kigawa T."/>
            <person name="Yokoyama S."/>
        </authorList>
    </citation>
    <scope>STRUCTURE BY NMR OF 516-629</scope>
</reference>
<reference key="17">
    <citation type="journal article" date="2016" name="Elife">
        <title>bMERB domains are bivalent Rab8 family effectors evolved by gene duplication.</title>
        <authorList>
            <person name="Rai A."/>
            <person name="Oprisko A."/>
            <person name="Campos J."/>
            <person name="Fu Y."/>
            <person name="Friese T."/>
            <person name="Itzen A."/>
            <person name="Goody R.S."/>
            <person name="Gazdag E.M."/>
            <person name="Muller M.P."/>
        </authorList>
    </citation>
    <scope>X-RAY CRYSTALLOGRAPHY (2.30 ANGSTROMS) OF 1796-1945 IN COMPLEX WITH RAB1B</scope>
    <scope>X-RAY CRYSTALLOGRAPHY (2.85 ANGSTROMS) OF 1796-1945 IN COMPLEX WITH RAB8A</scope>
    <scope>X-RAY CRYSTALLOGRAPHY (2.66 ANGSTROMS) OF 1796-1945 IN COMPLEX WITH RAB10</scope>
    <scope>INTERACTION WITH RAB13; RAB15 AND RAB35</scope>
    <scope>DOMAIN</scope>
</reference>